<protein>
    <recommendedName>
        <fullName>UPF0235 protein C15orf40 homolog</fullName>
    </recommendedName>
</protein>
<dbReference type="EMBL" id="AK019261">
    <property type="protein sequence ID" value="BAB31634.1"/>
    <property type="molecule type" value="mRNA"/>
</dbReference>
<dbReference type="EMBL" id="AK014163">
    <property type="protein sequence ID" value="BAB29184.1"/>
    <property type="molecule type" value="mRNA"/>
</dbReference>
<dbReference type="EMBL" id="AK018003">
    <property type="protein sequence ID" value="BAB31031.1"/>
    <property type="molecule type" value="mRNA"/>
</dbReference>
<dbReference type="EMBL" id="BC027500">
    <property type="protein sequence ID" value="AAH27500.1"/>
    <property type="molecule type" value="mRNA"/>
</dbReference>
<dbReference type="CCDS" id="CCDS40010.1"/>
<dbReference type="RefSeq" id="NP_001390294.1">
    <property type="nucleotide sequence ID" value="NM_001403365.1"/>
</dbReference>
<dbReference type="RefSeq" id="NP_080353.1">
    <property type="nucleotide sequence ID" value="NM_026077.5"/>
</dbReference>
<dbReference type="RefSeq" id="XP_011249199.1">
    <property type="nucleotide sequence ID" value="XM_011250897.2"/>
</dbReference>
<dbReference type="SMR" id="Q9CRC3"/>
<dbReference type="BioGRID" id="212078">
    <property type="interactions" value="1"/>
</dbReference>
<dbReference type="FunCoup" id="Q9CRC3">
    <property type="interactions" value="1163"/>
</dbReference>
<dbReference type="STRING" id="10090.ENSMUSP00000026092"/>
<dbReference type="PhosphoSitePlus" id="Q9CRC3"/>
<dbReference type="jPOST" id="Q9CRC3"/>
<dbReference type="PaxDb" id="10090-ENSMUSP00000026092"/>
<dbReference type="Pumba" id="Q9CRC3"/>
<dbReference type="Antibodypedia" id="49874">
    <property type="antibodies" value="173 antibodies from 18 providers"/>
</dbReference>
<dbReference type="DNASU" id="67290"/>
<dbReference type="Ensembl" id="ENSMUST00000026092.9">
    <property type="protein sequence ID" value="ENSMUSP00000026092.9"/>
    <property type="gene ID" value="ENSMUSG00000025102.15"/>
</dbReference>
<dbReference type="GeneID" id="67290"/>
<dbReference type="KEGG" id="mmu:67290"/>
<dbReference type="UCSC" id="uc009icm.1">
    <property type="organism name" value="mouse"/>
</dbReference>
<dbReference type="AGR" id="MGI:1914540"/>
<dbReference type="MGI" id="MGI:1914540">
    <property type="gene designation" value="3110040N11Rik"/>
</dbReference>
<dbReference type="VEuPathDB" id="HostDB:ENSMUSG00000025102"/>
<dbReference type="eggNOG" id="KOG3276">
    <property type="taxonomic scope" value="Eukaryota"/>
</dbReference>
<dbReference type="GeneTree" id="ENSGT00390000012420"/>
<dbReference type="HOGENOM" id="CLU_130694_2_0_1"/>
<dbReference type="InParanoid" id="Q9CRC3"/>
<dbReference type="OMA" id="NICIQIL"/>
<dbReference type="OrthoDB" id="244097at2759"/>
<dbReference type="PhylomeDB" id="Q9CRC3"/>
<dbReference type="TreeFam" id="TF313882"/>
<dbReference type="BioGRID-ORCS" id="67290">
    <property type="hits" value="0 hits in 75 CRISPR screens"/>
</dbReference>
<dbReference type="PRO" id="PR:Q9CRC3"/>
<dbReference type="Proteomes" id="UP000000589">
    <property type="component" value="Chromosome 7"/>
</dbReference>
<dbReference type="RNAct" id="Q9CRC3">
    <property type="molecule type" value="protein"/>
</dbReference>
<dbReference type="Bgee" id="ENSMUSG00000025102">
    <property type="expression patterns" value="Expressed in right kidney and 212 other cell types or tissues"/>
</dbReference>
<dbReference type="ExpressionAtlas" id="Q9CRC3">
    <property type="expression patterns" value="baseline and differential"/>
</dbReference>
<dbReference type="Gene3D" id="3.30.1200.10">
    <property type="entry name" value="YggU-like"/>
    <property type="match status" value="1"/>
</dbReference>
<dbReference type="HAMAP" id="MF_00634">
    <property type="entry name" value="UPF0235"/>
    <property type="match status" value="1"/>
</dbReference>
<dbReference type="InterPro" id="IPR003746">
    <property type="entry name" value="DUF167"/>
</dbReference>
<dbReference type="InterPro" id="IPR036591">
    <property type="entry name" value="YggU-like_sf"/>
</dbReference>
<dbReference type="NCBIfam" id="TIGR00251">
    <property type="entry name" value="DUF167 family protein"/>
    <property type="match status" value="1"/>
</dbReference>
<dbReference type="PANTHER" id="PTHR13420">
    <property type="entry name" value="UPF0235 PROTEIN C15ORF40"/>
    <property type="match status" value="1"/>
</dbReference>
<dbReference type="PANTHER" id="PTHR13420:SF7">
    <property type="entry name" value="UPF0235 PROTEIN C15ORF40"/>
    <property type="match status" value="1"/>
</dbReference>
<dbReference type="Pfam" id="PF02594">
    <property type="entry name" value="DUF167"/>
    <property type="match status" value="1"/>
</dbReference>
<dbReference type="SMART" id="SM01152">
    <property type="entry name" value="DUF167"/>
    <property type="match status" value="1"/>
</dbReference>
<dbReference type="SUPFAM" id="SSF69786">
    <property type="entry name" value="YggU-like"/>
    <property type="match status" value="1"/>
</dbReference>
<comment type="similarity">
    <text evidence="3">Belongs to the UPF0235 family.</text>
</comment>
<keyword id="KW-0597">Phosphoprotein</keyword>
<keyword id="KW-1185">Reference proteome</keyword>
<accession>Q9CRC3</accession>
<accession>Q8K3A3</accession>
<sequence length="126" mass="13189">MPKKAGATSKGKNQTKEPETAPPAAGPVATDPKGFVTIAIHAKPGSRQNAVTDLSTEAVGVAIAAPPSEGEANAELCRYLSKVLDLRKSDVVLDKGGKSREKVVKLLASTTPEEVLEKLKTEAEKK</sequence>
<name>CO040_MOUSE</name>
<reference key="1">
    <citation type="journal article" date="2005" name="Science">
        <title>The transcriptional landscape of the mammalian genome.</title>
        <authorList>
            <person name="Carninci P."/>
            <person name="Kasukawa T."/>
            <person name="Katayama S."/>
            <person name="Gough J."/>
            <person name="Frith M.C."/>
            <person name="Maeda N."/>
            <person name="Oyama R."/>
            <person name="Ravasi T."/>
            <person name="Lenhard B."/>
            <person name="Wells C."/>
            <person name="Kodzius R."/>
            <person name="Shimokawa K."/>
            <person name="Bajic V.B."/>
            <person name="Brenner S.E."/>
            <person name="Batalov S."/>
            <person name="Forrest A.R."/>
            <person name="Zavolan M."/>
            <person name="Davis M.J."/>
            <person name="Wilming L.G."/>
            <person name="Aidinis V."/>
            <person name="Allen J.E."/>
            <person name="Ambesi-Impiombato A."/>
            <person name="Apweiler R."/>
            <person name="Aturaliya R.N."/>
            <person name="Bailey T.L."/>
            <person name="Bansal M."/>
            <person name="Baxter L."/>
            <person name="Beisel K.W."/>
            <person name="Bersano T."/>
            <person name="Bono H."/>
            <person name="Chalk A.M."/>
            <person name="Chiu K.P."/>
            <person name="Choudhary V."/>
            <person name="Christoffels A."/>
            <person name="Clutterbuck D.R."/>
            <person name="Crowe M.L."/>
            <person name="Dalla E."/>
            <person name="Dalrymple B.P."/>
            <person name="de Bono B."/>
            <person name="Della Gatta G."/>
            <person name="di Bernardo D."/>
            <person name="Down T."/>
            <person name="Engstrom P."/>
            <person name="Fagiolini M."/>
            <person name="Faulkner G."/>
            <person name="Fletcher C.F."/>
            <person name="Fukushima T."/>
            <person name="Furuno M."/>
            <person name="Futaki S."/>
            <person name="Gariboldi M."/>
            <person name="Georgii-Hemming P."/>
            <person name="Gingeras T.R."/>
            <person name="Gojobori T."/>
            <person name="Green R.E."/>
            <person name="Gustincich S."/>
            <person name="Harbers M."/>
            <person name="Hayashi Y."/>
            <person name="Hensch T.K."/>
            <person name="Hirokawa N."/>
            <person name="Hill D."/>
            <person name="Huminiecki L."/>
            <person name="Iacono M."/>
            <person name="Ikeo K."/>
            <person name="Iwama A."/>
            <person name="Ishikawa T."/>
            <person name="Jakt M."/>
            <person name="Kanapin A."/>
            <person name="Katoh M."/>
            <person name="Kawasawa Y."/>
            <person name="Kelso J."/>
            <person name="Kitamura H."/>
            <person name="Kitano H."/>
            <person name="Kollias G."/>
            <person name="Krishnan S.P."/>
            <person name="Kruger A."/>
            <person name="Kummerfeld S.K."/>
            <person name="Kurochkin I.V."/>
            <person name="Lareau L.F."/>
            <person name="Lazarevic D."/>
            <person name="Lipovich L."/>
            <person name="Liu J."/>
            <person name="Liuni S."/>
            <person name="McWilliam S."/>
            <person name="Madan Babu M."/>
            <person name="Madera M."/>
            <person name="Marchionni L."/>
            <person name="Matsuda H."/>
            <person name="Matsuzawa S."/>
            <person name="Miki H."/>
            <person name="Mignone F."/>
            <person name="Miyake S."/>
            <person name="Morris K."/>
            <person name="Mottagui-Tabar S."/>
            <person name="Mulder N."/>
            <person name="Nakano N."/>
            <person name="Nakauchi H."/>
            <person name="Ng P."/>
            <person name="Nilsson R."/>
            <person name="Nishiguchi S."/>
            <person name="Nishikawa S."/>
            <person name="Nori F."/>
            <person name="Ohara O."/>
            <person name="Okazaki Y."/>
            <person name="Orlando V."/>
            <person name="Pang K.C."/>
            <person name="Pavan W.J."/>
            <person name="Pavesi G."/>
            <person name="Pesole G."/>
            <person name="Petrovsky N."/>
            <person name="Piazza S."/>
            <person name="Reed J."/>
            <person name="Reid J.F."/>
            <person name="Ring B.Z."/>
            <person name="Ringwald M."/>
            <person name="Rost B."/>
            <person name="Ruan Y."/>
            <person name="Salzberg S.L."/>
            <person name="Sandelin A."/>
            <person name="Schneider C."/>
            <person name="Schoenbach C."/>
            <person name="Sekiguchi K."/>
            <person name="Semple C.A."/>
            <person name="Seno S."/>
            <person name="Sessa L."/>
            <person name="Sheng Y."/>
            <person name="Shibata Y."/>
            <person name="Shimada H."/>
            <person name="Shimada K."/>
            <person name="Silva D."/>
            <person name="Sinclair B."/>
            <person name="Sperling S."/>
            <person name="Stupka E."/>
            <person name="Sugiura K."/>
            <person name="Sultana R."/>
            <person name="Takenaka Y."/>
            <person name="Taki K."/>
            <person name="Tammoja K."/>
            <person name="Tan S.L."/>
            <person name="Tang S."/>
            <person name="Taylor M.S."/>
            <person name="Tegner J."/>
            <person name="Teichmann S.A."/>
            <person name="Ueda H.R."/>
            <person name="van Nimwegen E."/>
            <person name="Verardo R."/>
            <person name="Wei C.L."/>
            <person name="Yagi K."/>
            <person name="Yamanishi H."/>
            <person name="Zabarovsky E."/>
            <person name="Zhu S."/>
            <person name="Zimmer A."/>
            <person name="Hide W."/>
            <person name="Bult C."/>
            <person name="Grimmond S.M."/>
            <person name="Teasdale R.D."/>
            <person name="Liu E.T."/>
            <person name="Brusic V."/>
            <person name="Quackenbush J."/>
            <person name="Wahlestedt C."/>
            <person name="Mattick J.S."/>
            <person name="Hume D.A."/>
            <person name="Kai C."/>
            <person name="Sasaki D."/>
            <person name="Tomaru Y."/>
            <person name="Fukuda S."/>
            <person name="Kanamori-Katayama M."/>
            <person name="Suzuki M."/>
            <person name="Aoki J."/>
            <person name="Arakawa T."/>
            <person name="Iida J."/>
            <person name="Imamura K."/>
            <person name="Itoh M."/>
            <person name="Kato T."/>
            <person name="Kawaji H."/>
            <person name="Kawagashira N."/>
            <person name="Kawashima T."/>
            <person name="Kojima M."/>
            <person name="Kondo S."/>
            <person name="Konno H."/>
            <person name="Nakano K."/>
            <person name="Ninomiya N."/>
            <person name="Nishio T."/>
            <person name="Okada M."/>
            <person name="Plessy C."/>
            <person name="Shibata K."/>
            <person name="Shiraki T."/>
            <person name="Suzuki S."/>
            <person name="Tagami M."/>
            <person name="Waki K."/>
            <person name="Watahiki A."/>
            <person name="Okamura-Oho Y."/>
            <person name="Suzuki H."/>
            <person name="Kawai J."/>
            <person name="Hayashizaki Y."/>
        </authorList>
    </citation>
    <scope>NUCLEOTIDE SEQUENCE [LARGE SCALE MRNA]</scope>
    <source>
        <strain>C57BL/6J</strain>
        <tissue>Embryo</tissue>
        <tissue>Thymus</tissue>
    </source>
</reference>
<reference key="2">
    <citation type="journal article" date="2004" name="Genome Res.">
        <title>The status, quality, and expansion of the NIH full-length cDNA project: the Mammalian Gene Collection (MGC).</title>
        <authorList>
            <consortium name="The MGC Project Team"/>
        </authorList>
    </citation>
    <scope>NUCLEOTIDE SEQUENCE [LARGE SCALE MRNA]</scope>
    <source>
        <tissue>Mammary gland</tissue>
    </source>
</reference>
<reference key="3">
    <citation type="journal article" date="2010" name="Cell">
        <title>A tissue-specific atlas of mouse protein phosphorylation and expression.</title>
        <authorList>
            <person name="Huttlin E.L."/>
            <person name="Jedrychowski M.P."/>
            <person name="Elias J.E."/>
            <person name="Goswami T."/>
            <person name="Rad R."/>
            <person name="Beausoleil S.A."/>
            <person name="Villen J."/>
            <person name="Haas W."/>
            <person name="Sowa M.E."/>
            <person name="Gygi S.P."/>
        </authorList>
    </citation>
    <scope>IDENTIFICATION BY MASS SPECTROMETRY [LARGE SCALE ANALYSIS]</scope>
    <source>
        <tissue>Brain</tissue>
        <tissue>Brown adipose tissue</tissue>
        <tissue>Liver</tissue>
    </source>
</reference>
<evidence type="ECO:0000250" key="1">
    <source>
        <dbReference type="UniProtKB" id="Q8WUR7"/>
    </source>
</evidence>
<evidence type="ECO:0000256" key="2">
    <source>
        <dbReference type="SAM" id="MobiDB-lite"/>
    </source>
</evidence>
<evidence type="ECO:0000305" key="3"/>
<feature type="chain" id="PRO_0000139476" description="UPF0235 protein C15orf40 homolog">
    <location>
        <begin position="1"/>
        <end position="126"/>
    </location>
</feature>
<feature type="region of interest" description="Disordered" evidence="2">
    <location>
        <begin position="1"/>
        <end position="32"/>
    </location>
</feature>
<feature type="modified residue" description="Phosphoserine" evidence="1">
    <location>
        <position position="89"/>
    </location>
</feature>
<feature type="sequence conflict" description="In Ref. 2; AAH27500." evidence="3" ref="2">
    <original>E</original>
    <variation>Q</variation>
    <location>
        <position position="69"/>
    </location>
</feature>
<organism>
    <name type="scientific">Mus musculus</name>
    <name type="common">Mouse</name>
    <dbReference type="NCBI Taxonomy" id="10090"/>
    <lineage>
        <taxon>Eukaryota</taxon>
        <taxon>Metazoa</taxon>
        <taxon>Chordata</taxon>
        <taxon>Craniata</taxon>
        <taxon>Vertebrata</taxon>
        <taxon>Euteleostomi</taxon>
        <taxon>Mammalia</taxon>
        <taxon>Eutheria</taxon>
        <taxon>Euarchontoglires</taxon>
        <taxon>Glires</taxon>
        <taxon>Rodentia</taxon>
        <taxon>Myomorpha</taxon>
        <taxon>Muroidea</taxon>
        <taxon>Muridae</taxon>
        <taxon>Murinae</taxon>
        <taxon>Mus</taxon>
        <taxon>Mus</taxon>
    </lineage>
</organism>
<proteinExistence type="evidence at protein level"/>